<name>RS21_ECO8A</name>
<organism>
    <name type="scientific">Escherichia coli O8 (strain IAI1)</name>
    <dbReference type="NCBI Taxonomy" id="585034"/>
    <lineage>
        <taxon>Bacteria</taxon>
        <taxon>Pseudomonadati</taxon>
        <taxon>Pseudomonadota</taxon>
        <taxon>Gammaproteobacteria</taxon>
        <taxon>Enterobacterales</taxon>
        <taxon>Enterobacteriaceae</taxon>
        <taxon>Escherichia</taxon>
    </lineage>
</organism>
<proteinExistence type="inferred from homology"/>
<evidence type="ECO:0000255" key="1">
    <source>
        <dbReference type="HAMAP-Rule" id="MF_00358"/>
    </source>
</evidence>
<evidence type="ECO:0000256" key="2">
    <source>
        <dbReference type="SAM" id="MobiDB-lite"/>
    </source>
</evidence>
<evidence type="ECO:0000305" key="3"/>
<feature type="chain" id="PRO_1000120615" description="Small ribosomal subunit protein bS21">
    <location>
        <begin position="1"/>
        <end position="71"/>
    </location>
</feature>
<feature type="region of interest" description="Disordered" evidence="2">
    <location>
        <begin position="43"/>
        <end position="71"/>
    </location>
</feature>
<feature type="compositionally biased region" description="Basic residues" evidence="2">
    <location>
        <begin position="46"/>
        <end position="59"/>
    </location>
</feature>
<feature type="compositionally biased region" description="Basic and acidic residues" evidence="2">
    <location>
        <begin position="60"/>
        <end position="71"/>
    </location>
</feature>
<comment type="similarity">
    <text evidence="1">Belongs to the bacterial ribosomal protein bS21 family.</text>
</comment>
<dbReference type="EMBL" id="CU928160">
    <property type="protein sequence ID" value="CAR00027.1"/>
    <property type="molecule type" value="Genomic_DNA"/>
</dbReference>
<dbReference type="RefSeq" id="WP_001144069.1">
    <property type="nucleotide sequence ID" value="NC_011741.1"/>
</dbReference>
<dbReference type="SMR" id="B7LZL5"/>
<dbReference type="GeneID" id="98390195"/>
<dbReference type="KEGG" id="ecr:ECIAI1_3213"/>
<dbReference type="HOGENOM" id="CLU_159258_1_0_6"/>
<dbReference type="GO" id="GO:1990904">
    <property type="term" value="C:ribonucleoprotein complex"/>
    <property type="evidence" value="ECO:0007669"/>
    <property type="project" value="UniProtKB-KW"/>
</dbReference>
<dbReference type="GO" id="GO:0005840">
    <property type="term" value="C:ribosome"/>
    <property type="evidence" value="ECO:0007669"/>
    <property type="project" value="UniProtKB-KW"/>
</dbReference>
<dbReference type="GO" id="GO:0003735">
    <property type="term" value="F:structural constituent of ribosome"/>
    <property type="evidence" value="ECO:0007669"/>
    <property type="project" value="InterPro"/>
</dbReference>
<dbReference type="GO" id="GO:0006412">
    <property type="term" value="P:translation"/>
    <property type="evidence" value="ECO:0007669"/>
    <property type="project" value="UniProtKB-UniRule"/>
</dbReference>
<dbReference type="FunFam" id="1.20.5.1150:FF:000001">
    <property type="entry name" value="30S ribosomal protein S21"/>
    <property type="match status" value="1"/>
</dbReference>
<dbReference type="Gene3D" id="1.20.5.1150">
    <property type="entry name" value="Ribosomal protein S8"/>
    <property type="match status" value="1"/>
</dbReference>
<dbReference type="HAMAP" id="MF_00358">
    <property type="entry name" value="Ribosomal_bS21"/>
    <property type="match status" value="1"/>
</dbReference>
<dbReference type="InterPro" id="IPR001911">
    <property type="entry name" value="Ribosomal_bS21"/>
</dbReference>
<dbReference type="InterPro" id="IPR018278">
    <property type="entry name" value="Ribosomal_bS21_CS"/>
</dbReference>
<dbReference type="InterPro" id="IPR038380">
    <property type="entry name" value="Ribosomal_bS21_sf"/>
</dbReference>
<dbReference type="NCBIfam" id="TIGR00030">
    <property type="entry name" value="S21p"/>
    <property type="match status" value="1"/>
</dbReference>
<dbReference type="PANTHER" id="PTHR21109">
    <property type="entry name" value="MITOCHONDRIAL 28S RIBOSOMAL PROTEIN S21"/>
    <property type="match status" value="1"/>
</dbReference>
<dbReference type="PANTHER" id="PTHR21109:SF22">
    <property type="entry name" value="SMALL RIBOSOMAL SUBUNIT PROTEIN BS21"/>
    <property type="match status" value="1"/>
</dbReference>
<dbReference type="Pfam" id="PF01165">
    <property type="entry name" value="Ribosomal_S21"/>
    <property type="match status" value="1"/>
</dbReference>
<dbReference type="PRINTS" id="PR00976">
    <property type="entry name" value="RIBOSOMALS21"/>
</dbReference>
<dbReference type="PROSITE" id="PS01181">
    <property type="entry name" value="RIBOSOMAL_S21"/>
    <property type="match status" value="1"/>
</dbReference>
<accession>B7LZL5</accession>
<keyword id="KW-0687">Ribonucleoprotein</keyword>
<keyword id="KW-0689">Ribosomal protein</keyword>
<reference key="1">
    <citation type="journal article" date="2009" name="PLoS Genet.">
        <title>Organised genome dynamics in the Escherichia coli species results in highly diverse adaptive paths.</title>
        <authorList>
            <person name="Touchon M."/>
            <person name="Hoede C."/>
            <person name="Tenaillon O."/>
            <person name="Barbe V."/>
            <person name="Baeriswyl S."/>
            <person name="Bidet P."/>
            <person name="Bingen E."/>
            <person name="Bonacorsi S."/>
            <person name="Bouchier C."/>
            <person name="Bouvet O."/>
            <person name="Calteau A."/>
            <person name="Chiapello H."/>
            <person name="Clermont O."/>
            <person name="Cruveiller S."/>
            <person name="Danchin A."/>
            <person name="Diard M."/>
            <person name="Dossat C."/>
            <person name="Karoui M.E."/>
            <person name="Frapy E."/>
            <person name="Garry L."/>
            <person name="Ghigo J.M."/>
            <person name="Gilles A.M."/>
            <person name="Johnson J."/>
            <person name="Le Bouguenec C."/>
            <person name="Lescat M."/>
            <person name="Mangenot S."/>
            <person name="Martinez-Jehanne V."/>
            <person name="Matic I."/>
            <person name="Nassif X."/>
            <person name="Oztas S."/>
            <person name="Petit M.A."/>
            <person name="Pichon C."/>
            <person name="Rouy Z."/>
            <person name="Ruf C.S."/>
            <person name="Schneider D."/>
            <person name="Tourret J."/>
            <person name="Vacherie B."/>
            <person name="Vallenet D."/>
            <person name="Medigue C."/>
            <person name="Rocha E.P.C."/>
            <person name="Denamur E."/>
        </authorList>
    </citation>
    <scope>NUCLEOTIDE SEQUENCE [LARGE SCALE GENOMIC DNA]</scope>
    <source>
        <strain>IAI1</strain>
    </source>
</reference>
<protein>
    <recommendedName>
        <fullName evidence="1">Small ribosomal subunit protein bS21</fullName>
    </recommendedName>
    <alternativeName>
        <fullName evidence="3">30S ribosomal protein S21</fullName>
    </alternativeName>
</protein>
<sequence>MPVIKVRENEPFDVALRRFKRSCEKAGVLAEVRRREFYEKPTTERKRAKASAVKRHAKKLARENARRTRLY</sequence>
<gene>
    <name evidence="1" type="primary">rpsU</name>
    <name type="ordered locus">ECIAI1_3213</name>
</gene>